<dbReference type="EC" id="1.1.1.25" evidence="1"/>
<dbReference type="EMBL" id="CP000386">
    <property type="protein sequence ID" value="ABG04325.1"/>
    <property type="molecule type" value="Genomic_DNA"/>
</dbReference>
<dbReference type="RefSeq" id="WP_011564342.1">
    <property type="nucleotide sequence ID" value="NC_008148.1"/>
</dbReference>
<dbReference type="SMR" id="Q1AWA3"/>
<dbReference type="STRING" id="266117.Rxyl_1362"/>
<dbReference type="KEGG" id="rxy:Rxyl_1362"/>
<dbReference type="eggNOG" id="COG0169">
    <property type="taxonomic scope" value="Bacteria"/>
</dbReference>
<dbReference type="HOGENOM" id="CLU_044063_4_1_11"/>
<dbReference type="PhylomeDB" id="Q1AWA3"/>
<dbReference type="UniPathway" id="UPA00053">
    <property type="reaction ID" value="UER00087"/>
</dbReference>
<dbReference type="Proteomes" id="UP000006637">
    <property type="component" value="Chromosome"/>
</dbReference>
<dbReference type="GO" id="GO:0050661">
    <property type="term" value="F:NADP binding"/>
    <property type="evidence" value="ECO:0007669"/>
    <property type="project" value="InterPro"/>
</dbReference>
<dbReference type="GO" id="GO:0004764">
    <property type="term" value="F:shikimate 3-dehydrogenase (NADP+) activity"/>
    <property type="evidence" value="ECO:0007669"/>
    <property type="project" value="UniProtKB-UniRule"/>
</dbReference>
<dbReference type="GO" id="GO:0008652">
    <property type="term" value="P:amino acid biosynthetic process"/>
    <property type="evidence" value="ECO:0007669"/>
    <property type="project" value="UniProtKB-KW"/>
</dbReference>
<dbReference type="GO" id="GO:0009073">
    <property type="term" value="P:aromatic amino acid family biosynthetic process"/>
    <property type="evidence" value="ECO:0007669"/>
    <property type="project" value="UniProtKB-KW"/>
</dbReference>
<dbReference type="GO" id="GO:0009423">
    <property type="term" value="P:chorismate biosynthetic process"/>
    <property type="evidence" value="ECO:0007669"/>
    <property type="project" value="UniProtKB-UniRule"/>
</dbReference>
<dbReference type="GO" id="GO:0019632">
    <property type="term" value="P:shikimate metabolic process"/>
    <property type="evidence" value="ECO:0007669"/>
    <property type="project" value="InterPro"/>
</dbReference>
<dbReference type="CDD" id="cd01065">
    <property type="entry name" value="NAD_bind_Shikimate_DH"/>
    <property type="match status" value="1"/>
</dbReference>
<dbReference type="Gene3D" id="3.40.50.10860">
    <property type="entry name" value="Leucine Dehydrogenase, chain A, domain 1"/>
    <property type="match status" value="1"/>
</dbReference>
<dbReference type="Gene3D" id="3.40.50.720">
    <property type="entry name" value="NAD(P)-binding Rossmann-like Domain"/>
    <property type="match status" value="1"/>
</dbReference>
<dbReference type="HAMAP" id="MF_00222">
    <property type="entry name" value="Shikimate_DH_AroE"/>
    <property type="match status" value="1"/>
</dbReference>
<dbReference type="InterPro" id="IPR046346">
    <property type="entry name" value="Aminoacid_DH-like_N_sf"/>
</dbReference>
<dbReference type="InterPro" id="IPR036291">
    <property type="entry name" value="NAD(P)-bd_dom_sf"/>
</dbReference>
<dbReference type="InterPro" id="IPR041121">
    <property type="entry name" value="SDH_C"/>
</dbReference>
<dbReference type="InterPro" id="IPR011342">
    <property type="entry name" value="Shikimate_DH"/>
</dbReference>
<dbReference type="InterPro" id="IPR013708">
    <property type="entry name" value="Shikimate_DH-bd_N"/>
</dbReference>
<dbReference type="InterPro" id="IPR022893">
    <property type="entry name" value="Shikimate_DH_fam"/>
</dbReference>
<dbReference type="InterPro" id="IPR006151">
    <property type="entry name" value="Shikm_DH/Glu-tRNA_Rdtase"/>
</dbReference>
<dbReference type="NCBIfam" id="TIGR00507">
    <property type="entry name" value="aroE"/>
    <property type="match status" value="1"/>
</dbReference>
<dbReference type="NCBIfam" id="NF001319">
    <property type="entry name" value="PRK00258.3-3"/>
    <property type="match status" value="1"/>
</dbReference>
<dbReference type="PANTHER" id="PTHR21089:SF1">
    <property type="entry name" value="BIFUNCTIONAL 3-DEHYDROQUINATE DEHYDRATASE_SHIKIMATE DEHYDROGENASE, CHLOROPLASTIC"/>
    <property type="match status" value="1"/>
</dbReference>
<dbReference type="PANTHER" id="PTHR21089">
    <property type="entry name" value="SHIKIMATE DEHYDROGENASE"/>
    <property type="match status" value="1"/>
</dbReference>
<dbReference type="Pfam" id="PF18317">
    <property type="entry name" value="SDH_C"/>
    <property type="match status" value="1"/>
</dbReference>
<dbReference type="Pfam" id="PF01488">
    <property type="entry name" value="Shikimate_DH"/>
    <property type="match status" value="1"/>
</dbReference>
<dbReference type="Pfam" id="PF08501">
    <property type="entry name" value="Shikimate_dh_N"/>
    <property type="match status" value="1"/>
</dbReference>
<dbReference type="SUPFAM" id="SSF53223">
    <property type="entry name" value="Aminoacid dehydrogenase-like, N-terminal domain"/>
    <property type="match status" value="1"/>
</dbReference>
<dbReference type="SUPFAM" id="SSF51735">
    <property type="entry name" value="NAD(P)-binding Rossmann-fold domains"/>
    <property type="match status" value="1"/>
</dbReference>
<reference key="1">
    <citation type="submission" date="2006-06" db="EMBL/GenBank/DDBJ databases">
        <title>Complete sequence of Rubrobacter xylanophilus DSM 9941.</title>
        <authorList>
            <consortium name="US DOE Joint Genome Institute"/>
            <person name="Copeland A."/>
            <person name="Lucas S."/>
            <person name="Lapidus A."/>
            <person name="Barry K."/>
            <person name="Detter J.C."/>
            <person name="Glavina del Rio T."/>
            <person name="Hammon N."/>
            <person name="Israni S."/>
            <person name="Dalin E."/>
            <person name="Tice H."/>
            <person name="Pitluck S."/>
            <person name="Munk A.C."/>
            <person name="Brettin T."/>
            <person name="Bruce D."/>
            <person name="Han C."/>
            <person name="Tapia R."/>
            <person name="Gilna P."/>
            <person name="Schmutz J."/>
            <person name="Larimer F."/>
            <person name="Land M."/>
            <person name="Hauser L."/>
            <person name="Kyrpides N."/>
            <person name="Lykidis A."/>
            <person name="da Costa M.S."/>
            <person name="Rainey F.A."/>
            <person name="Empadinhas N."/>
            <person name="Jolivet E."/>
            <person name="Battista J.R."/>
            <person name="Richardson P."/>
        </authorList>
    </citation>
    <scope>NUCLEOTIDE SEQUENCE [LARGE SCALE GENOMIC DNA]</scope>
    <source>
        <strain>DSM 9941 / JCM 11954 / NBRC 16129 / PRD-1</strain>
    </source>
</reference>
<organism>
    <name type="scientific">Rubrobacter xylanophilus (strain DSM 9941 / JCM 11954 / NBRC 16129 / PRD-1)</name>
    <dbReference type="NCBI Taxonomy" id="266117"/>
    <lineage>
        <taxon>Bacteria</taxon>
        <taxon>Bacillati</taxon>
        <taxon>Actinomycetota</taxon>
        <taxon>Rubrobacteria</taxon>
        <taxon>Rubrobacterales</taxon>
        <taxon>Rubrobacteraceae</taxon>
        <taxon>Rubrobacter</taxon>
    </lineage>
</organism>
<proteinExistence type="inferred from homology"/>
<feature type="chain" id="PRO_0000325160" description="Shikimate dehydrogenase (NADP(+))">
    <location>
        <begin position="1"/>
        <end position="284"/>
    </location>
</feature>
<feature type="active site" description="Proton acceptor" evidence="1">
    <location>
        <position position="74"/>
    </location>
</feature>
<feature type="binding site" evidence="1">
    <location>
        <begin position="23"/>
        <end position="25"/>
    </location>
    <ligand>
        <name>shikimate</name>
        <dbReference type="ChEBI" id="CHEBI:36208"/>
    </ligand>
</feature>
<feature type="binding site" evidence="1">
    <location>
        <position position="70"/>
    </location>
    <ligand>
        <name>shikimate</name>
        <dbReference type="ChEBI" id="CHEBI:36208"/>
    </ligand>
</feature>
<feature type="binding site" evidence="1">
    <location>
        <position position="86"/>
    </location>
    <ligand>
        <name>NADP(+)</name>
        <dbReference type="ChEBI" id="CHEBI:58349"/>
    </ligand>
</feature>
<feature type="binding site" evidence="1">
    <location>
        <position position="95"/>
    </location>
    <ligand>
        <name>shikimate</name>
        <dbReference type="ChEBI" id="CHEBI:36208"/>
    </ligand>
</feature>
<feature type="binding site" evidence="1">
    <location>
        <position position="111"/>
    </location>
    <ligand>
        <name>shikimate</name>
        <dbReference type="ChEBI" id="CHEBI:36208"/>
    </ligand>
</feature>
<feature type="binding site" evidence="1">
    <location>
        <begin position="135"/>
        <end position="139"/>
    </location>
    <ligand>
        <name>NADP(+)</name>
        <dbReference type="ChEBI" id="CHEBI:58349"/>
    </ligand>
</feature>
<feature type="binding site" evidence="1">
    <location>
        <begin position="159"/>
        <end position="164"/>
    </location>
    <ligand>
        <name>NADP(+)</name>
        <dbReference type="ChEBI" id="CHEBI:58349"/>
    </ligand>
</feature>
<feature type="binding site" evidence="1">
    <location>
        <position position="227"/>
    </location>
    <ligand>
        <name>NADP(+)</name>
        <dbReference type="ChEBI" id="CHEBI:58349"/>
    </ligand>
</feature>
<feature type="binding site" evidence="1">
    <location>
        <position position="229"/>
    </location>
    <ligand>
        <name>shikimate</name>
        <dbReference type="ChEBI" id="CHEBI:36208"/>
    </ligand>
</feature>
<feature type="binding site" evidence="1">
    <location>
        <position position="251"/>
    </location>
    <ligand>
        <name>NADP(+)</name>
        <dbReference type="ChEBI" id="CHEBI:58349"/>
    </ligand>
</feature>
<name>AROE_RUBXD</name>
<sequence>MSVPRIDGETSLVGLIGHPVSHSLSPQMHNASFAALGLNYVYVPLDVPPEELEAGVRGLRALGFRGFNVTMPHKERVCALVDRLDEAARISGAVNTVAVEEDGSLLGMNTDGSGFLLACREAGVEPSGRVALVAGAGGAAAAVAVALLRAGLSELRIANRTPGRALGLRERLGGLGGRVEVFPLSGLAEAAGGADILVNATYLGMRAGDPLPFPEELLRPGVAVCDAVYRPGKSTALVRAARRRGLAAVPGELMLLYQGVEAQRAWTGVDPDVGAMRRALSGEG</sequence>
<gene>
    <name evidence="1" type="primary">aroE</name>
    <name type="ordered locus">Rxyl_1362</name>
</gene>
<evidence type="ECO:0000255" key="1">
    <source>
        <dbReference type="HAMAP-Rule" id="MF_00222"/>
    </source>
</evidence>
<protein>
    <recommendedName>
        <fullName evidence="1">Shikimate dehydrogenase (NADP(+))</fullName>
        <shortName evidence="1">SDH</shortName>
        <ecNumber evidence="1">1.1.1.25</ecNumber>
    </recommendedName>
</protein>
<keyword id="KW-0028">Amino-acid biosynthesis</keyword>
<keyword id="KW-0057">Aromatic amino acid biosynthesis</keyword>
<keyword id="KW-0521">NADP</keyword>
<keyword id="KW-0560">Oxidoreductase</keyword>
<keyword id="KW-1185">Reference proteome</keyword>
<comment type="function">
    <text evidence="1">Involved in the biosynthesis of the chorismate, which leads to the biosynthesis of aromatic amino acids. Catalyzes the reversible NADPH linked reduction of 3-dehydroshikimate (DHSA) to yield shikimate (SA).</text>
</comment>
<comment type="catalytic activity">
    <reaction evidence="1">
        <text>shikimate + NADP(+) = 3-dehydroshikimate + NADPH + H(+)</text>
        <dbReference type="Rhea" id="RHEA:17737"/>
        <dbReference type="ChEBI" id="CHEBI:15378"/>
        <dbReference type="ChEBI" id="CHEBI:16630"/>
        <dbReference type="ChEBI" id="CHEBI:36208"/>
        <dbReference type="ChEBI" id="CHEBI:57783"/>
        <dbReference type="ChEBI" id="CHEBI:58349"/>
        <dbReference type="EC" id="1.1.1.25"/>
    </reaction>
</comment>
<comment type="pathway">
    <text evidence="1">Metabolic intermediate biosynthesis; chorismate biosynthesis; chorismate from D-erythrose 4-phosphate and phosphoenolpyruvate: step 4/7.</text>
</comment>
<comment type="subunit">
    <text evidence="1">Homodimer.</text>
</comment>
<comment type="similarity">
    <text evidence="1">Belongs to the shikimate dehydrogenase family.</text>
</comment>
<accession>Q1AWA3</accession>